<dbReference type="EMBL" id="CR936503">
    <property type="protein sequence ID" value="CAI54432.1"/>
    <property type="molecule type" value="Genomic_DNA"/>
</dbReference>
<dbReference type="RefSeq" id="WP_011373846.1">
    <property type="nucleotide sequence ID" value="NC_007576.1"/>
</dbReference>
<dbReference type="SMR" id="Q38ZE5"/>
<dbReference type="STRING" id="314315.LCA_0135"/>
<dbReference type="KEGG" id="lsa:LCA_0135"/>
<dbReference type="eggNOG" id="COG0239">
    <property type="taxonomic scope" value="Bacteria"/>
</dbReference>
<dbReference type="HOGENOM" id="CLU_114342_1_2_9"/>
<dbReference type="OrthoDB" id="9799631at2"/>
<dbReference type="Proteomes" id="UP000002707">
    <property type="component" value="Chromosome"/>
</dbReference>
<dbReference type="GO" id="GO:0005886">
    <property type="term" value="C:plasma membrane"/>
    <property type="evidence" value="ECO:0007669"/>
    <property type="project" value="UniProtKB-SubCell"/>
</dbReference>
<dbReference type="GO" id="GO:0062054">
    <property type="term" value="F:fluoride channel activity"/>
    <property type="evidence" value="ECO:0007669"/>
    <property type="project" value="UniProtKB-UniRule"/>
</dbReference>
<dbReference type="GO" id="GO:0046872">
    <property type="term" value="F:metal ion binding"/>
    <property type="evidence" value="ECO:0007669"/>
    <property type="project" value="UniProtKB-KW"/>
</dbReference>
<dbReference type="GO" id="GO:0140114">
    <property type="term" value="P:cellular detoxification of fluoride"/>
    <property type="evidence" value="ECO:0007669"/>
    <property type="project" value="UniProtKB-UniRule"/>
</dbReference>
<dbReference type="HAMAP" id="MF_00454">
    <property type="entry name" value="FluC"/>
    <property type="match status" value="1"/>
</dbReference>
<dbReference type="InterPro" id="IPR003691">
    <property type="entry name" value="FluC"/>
</dbReference>
<dbReference type="NCBIfam" id="TIGR00494">
    <property type="entry name" value="crcB"/>
    <property type="match status" value="1"/>
</dbReference>
<dbReference type="PANTHER" id="PTHR28259">
    <property type="entry name" value="FLUORIDE EXPORT PROTEIN 1-RELATED"/>
    <property type="match status" value="1"/>
</dbReference>
<dbReference type="PANTHER" id="PTHR28259:SF1">
    <property type="entry name" value="FLUORIDE EXPORT PROTEIN 1-RELATED"/>
    <property type="match status" value="1"/>
</dbReference>
<dbReference type="Pfam" id="PF02537">
    <property type="entry name" value="CRCB"/>
    <property type="match status" value="1"/>
</dbReference>
<keyword id="KW-1003">Cell membrane</keyword>
<keyword id="KW-0407">Ion channel</keyword>
<keyword id="KW-0406">Ion transport</keyword>
<keyword id="KW-0472">Membrane</keyword>
<keyword id="KW-0479">Metal-binding</keyword>
<keyword id="KW-1185">Reference proteome</keyword>
<keyword id="KW-0915">Sodium</keyword>
<keyword id="KW-0812">Transmembrane</keyword>
<keyword id="KW-1133">Transmembrane helix</keyword>
<keyword id="KW-0813">Transport</keyword>
<reference key="1">
    <citation type="journal article" date="2005" name="Nat. Biotechnol.">
        <title>The complete genome sequence of the meat-borne lactic acid bacterium Lactobacillus sakei 23K.</title>
        <authorList>
            <person name="Chaillou S."/>
            <person name="Champomier-Verges M.-C."/>
            <person name="Cornet M."/>
            <person name="Crutz-Le Coq A.-M."/>
            <person name="Dudez A.-M."/>
            <person name="Martin V."/>
            <person name="Beaufils S."/>
            <person name="Darbon-Rongere E."/>
            <person name="Bossy R."/>
            <person name="Loux V."/>
            <person name="Zagorec M."/>
        </authorList>
    </citation>
    <scope>NUCLEOTIDE SEQUENCE [LARGE SCALE GENOMIC DNA]</scope>
    <source>
        <strain>23K</strain>
    </source>
</reference>
<proteinExistence type="inferred from homology"/>
<protein>
    <recommendedName>
        <fullName evidence="1">Fluoride-specific ion channel FluC 1</fullName>
    </recommendedName>
</protein>
<sequence length="135" mass="14863">MKIKESLAVGSFAFFGGILRYLIGLVLNQPTGFPYGTLCVNLIGAFCLPFLMRYIVARLHLSDQLALAIGTGFFGAFTTFSSFSVDAIRLVNQQQWSAFAWYVGISMVGGVLLSLLADYWAVKLTHNPEEQEVSQ</sequence>
<evidence type="ECO:0000255" key="1">
    <source>
        <dbReference type="HAMAP-Rule" id="MF_00454"/>
    </source>
</evidence>
<gene>
    <name evidence="1" type="primary">fluC1</name>
    <name evidence="1" type="synonym">crcB1</name>
    <name type="ordered locus">LCA_0135</name>
</gene>
<feature type="chain" id="PRO_0000252892" description="Fluoride-specific ion channel FluC 1">
    <location>
        <begin position="1"/>
        <end position="135"/>
    </location>
</feature>
<feature type="transmembrane region" description="Helical" evidence="1">
    <location>
        <begin position="7"/>
        <end position="27"/>
    </location>
</feature>
<feature type="transmembrane region" description="Helical" evidence="1">
    <location>
        <begin position="32"/>
        <end position="52"/>
    </location>
</feature>
<feature type="transmembrane region" description="Helical" evidence="1">
    <location>
        <begin position="65"/>
        <end position="85"/>
    </location>
</feature>
<feature type="transmembrane region" description="Helical" evidence="1">
    <location>
        <begin position="96"/>
        <end position="116"/>
    </location>
</feature>
<feature type="binding site" evidence="1">
    <location>
        <position position="75"/>
    </location>
    <ligand>
        <name>Na(+)</name>
        <dbReference type="ChEBI" id="CHEBI:29101"/>
        <note>structural</note>
    </ligand>
</feature>
<feature type="binding site" evidence="1">
    <location>
        <position position="78"/>
    </location>
    <ligand>
        <name>Na(+)</name>
        <dbReference type="ChEBI" id="CHEBI:29101"/>
        <note>structural</note>
    </ligand>
</feature>
<accession>Q38ZE5</accession>
<name>FLUC1_LATSS</name>
<comment type="function">
    <text evidence="1">Fluoride-specific ion channel. Important for reducing fluoride concentration in the cell, thus reducing its toxicity.</text>
</comment>
<comment type="catalytic activity">
    <reaction evidence="1">
        <text>fluoride(in) = fluoride(out)</text>
        <dbReference type="Rhea" id="RHEA:76159"/>
        <dbReference type="ChEBI" id="CHEBI:17051"/>
    </reaction>
    <physiologicalReaction direction="left-to-right" evidence="1">
        <dbReference type="Rhea" id="RHEA:76160"/>
    </physiologicalReaction>
</comment>
<comment type="activity regulation">
    <text evidence="1">Na(+) is not transported, but it plays an essential structural role and its presence is essential for fluoride channel function.</text>
</comment>
<comment type="subcellular location">
    <subcellularLocation>
        <location evidence="1">Cell membrane</location>
        <topology evidence="1">Multi-pass membrane protein</topology>
    </subcellularLocation>
</comment>
<comment type="similarity">
    <text evidence="1">Belongs to the fluoride channel Fluc/FEX (TC 1.A.43) family.</text>
</comment>
<organism>
    <name type="scientific">Latilactobacillus sakei subsp. sakei (strain 23K)</name>
    <name type="common">Lactobacillus sakei subsp. sakei</name>
    <dbReference type="NCBI Taxonomy" id="314315"/>
    <lineage>
        <taxon>Bacteria</taxon>
        <taxon>Bacillati</taxon>
        <taxon>Bacillota</taxon>
        <taxon>Bacilli</taxon>
        <taxon>Lactobacillales</taxon>
        <taxon>Lactobacillaceae</taxon>
        <taxon>Latilactobacillus</taxon>
    </lineage>
</organism>